<organism>
    <name type="scientific">Homo sapiens</name>
    <name type="common">Human</name>
    <dbReference type="NCBI Taxonomy" id="9606"/>
    <lineage>
        <taxon>Eukaryota</taxon>
        <taxon>Metazoa</taxon>
        <taxon>Chordata</taxon>
        <taxon>Craniata</taxon>
        <taxon>Vertebrata</taxon>
        <taxon>Euteleostomi</taxon>
        <taxon>Mammalia</taxon>
        <taxon>Eutheria</taxon>
        <taxon>Euarchontoglires</taxon>
        <taxon>Primates</taxon>
        <taxon>Haplorrhini</taxon>
        <taxon>Catarrhini</taxon>
        <taxon>Hominidae</taxon>
        <taxon>Homo</taxon>
    </lineage>
</organism>
<keyword id="KW-0025">Alternative splicing</keyword>
<keyword id="KW-0143">Chaperone</keyword>
<keyword id="KW-0472">Membrane</keyword>
<keyword id="KW-1267">Proteomics identification</keyword>
<keyword id="KW-1185">Reference proteome</keyword>
<keyword id="KW-0812">Transmembrane</keyword>
<keyword id="KW-1133">Transmembrane helix</keyword>
<comment type="subcellular location">
    <subcellularLocation>
        <location evidence="7">Membrane</location>
        <topology evidence="7">Multi-pass membrane protein</topology>
    </subcellularLocation>
</comment>
<comment type="alternative products">
    <event type="alternative splicing"/>
    <isoform>
        <id>Q9H1X3-1</id>
        <name>1</name>
        <sequence type="displayed"/>
    </isoform>
    <isoform>
        <id>Q9H1X3-2</id>
        <name>2</name>
        <sequence type="described" ref="VSP_035180"/>
    </isoform>
    <isoform>
        <id>Q9H1X3-3</id>
        <name>3</name>
        <sequence type="described" ref="VSP_035181 VSP_035182"/>
    </isoform>
</comment>
<comment type="similarity">
    <text evidence="7">Belongs to the DNAJC25 family.</text>
</comment>
<gene>
    <name type="primary">DNAJC25</name>
</gene>
<dbReference type="EMBL" id="AF447177">
    <property type="protein sequence ID" value="AAQ04643.1"/>
    <property type="molecule type" value="mRNA"/>
</dbReference>
<dbReference type="EMBL" id="AK095452">
    <property type="protein sequence ID" value="BAG53057.1"/>
    <property type="molecule type" value="mRNA"/>
</dbReference>
<dbReference type="EMBL" id="BT007068">
    <property type="protein sequence ID" value="AAP35731.1"/>
    <property type="molecule type" value="mRNA"/>
</dbReference>
<dbReference type="EMBL" id="AL135787">
    <property type="status" value="NOT_ANNOTATED_CDS"/>
    <property type="molecule type" value="Genomic_DNA"/>
</dbReference>
<dbReference type="EMBL" id="CH471105">
    <property type="protein sequence ID" value="EAW59082.1"/>
    <property type="molecule type" value="Genomic_DNA"/>
</dbReference>
<dbReference type="EMBL" id="CH471105">
    <property type="protein sequence ID" value="EAW59085.1"/>
    <property type="molecule type" value="Genomic_DNA"/>
</dbReference>
<dbReference type="EMBL" id="BC015391">
    <property type="protein sequence ID" value="AAH15391.1"/>
    <property type="molecule type" value="mRNA"/>
</dbReference>
<dbReference type="EMBL" id="BC048318">
    <property type="protein sequence ID" value="AAH48318.1"/>
    <property type="molecule type" value="mRNA"/>
</dbReference>
<dbReference type="CCDS" id="CCDS43862.1">
    <molecule id="Q9H1X3-1"/>
</dbReference>
<dbReference type="RefSeq" id="NP_001015882.2">
    <molecule id="Q9H1X3-1"/>
    <property type="nucleotide sequence ID" value="NM_001015882.3"/>
</dbReference>
<dbReference type="RefSeq" id="NP_004116.2">
    <molecule id="Q9H1X3-3"/>
    <property type="nucleotide sequence ID" value="NM_004125.3"/>
</dbReference>
<dbReference type="SMR" id="Q9H1X3"/>
<dbReference type="BioGRID" id="139240">
    <property type="interactions" value="286"/>
</dbReference>
<dbReference type="BioGRID" id="139267">
    <property type="interactions" value="36"/>
</dbReference>
<dbReference type="FunCoup" id="Q9H1X3">
    <property type="interactions" value="791"/>
</dbReference>
<dbReference type="IntAct" id="Q9H1X3">
    <property type="interactions" value="12"/>
</dbReference>
<dbReference type="STRING" id="9606.ENSP00000320650"/>
<dbReference type="iPTMnet" id="Q9H1X3"/>
<dbReference type="PhosphoSitePlus" id="Q9H1X3"/>
<dbReference type="SwissPalm" id="Q9H1X3"/>
<dbReference type="BioMuta" id="DNAJC25"/>
<dbReference type="DMDM" id="74752592"/>
<dbReference type="jPOST" id="Q9H1X3"/>
<dbReference type="MassIVE" id="Q9H1X3"/>
<dbReference type="PaxDb" id="9606-ENSP00000320650"/>
<dbReference type="PeptideAtlas" id="Q9H1X3"/>
<dbReference type="ProteomicsDB" id="80452">
    <molecule id="Q9H1X3-1"/>
</dbReference>
<dbReference type="ProteomicsDB" id="80453">
    <molecule id="Q9H1X3-2"/>
</dbReference>
<dbReference type="ProteomicsDB" id="80454">
    <molecule id="Q9H1X3-3"/>
</dbReference>
<dbReference type="Pumba" id="Q9H1X3"/>
<dbReference type="Antibodypedia" id="15144">
    <property type="antibodies" value="94 antibodies from 17 providers"/>
</dbReference>
<dbReference type="DNASU" id="548645"/>
<dbReference type="Ensembl" id="ENST00000313525.4">
    <molecule id="Q9H1X3-1"/>
    <property type="protein sequence ID" value="ENSP00000320650.3"/>
    <property type="gene ID" value="ENSG00000059769.20"/>
</dbReference>
<dbReference type="GeneID" id="548645"/>
<dbReference type="KEGG" id="hsa:548645"/>
<dbReference type="KEGG" id="hsa:552891"/>
<dbReference type="MANE-Select" id="ENST00000313525.4">
    <property type="protein sequence ID" value="ENSP00000320650.3"/>
    <property type="RefSeq nucleotide sequence ID" value="NM_001015882.3"/>
    <property type="RefSeq protein sequence ID" value="NP_001015882.2"/>
</dbReference>
<dbReference type="UCSC" id="uc004bfl.3">
    <molecule id="Q9H1X3-1"/>
    <property type="organism name" value="human"/>
</dbReference>
<dbReference type="AGR" id="HGNC:34187"/>
<dbReference type="AGR" id="HGNC:37501"/>
<dbReference type="CTD" id="548645"/>
<dbReference type="CTD" id="552891"/>
<dbReference type="DisGeNET" id="548645"/>
<dbReference type="GeneCards" id="DNAJC25"/>
<dbReference type="HGNC" id="HGNC:34187">
    <property type="gene designation" value="DNAJC25"/>
</dbReference>
<dbReference type="HPA" id="ENSG00000059769">
    <property type="expression patterns" value="Tissue enriched (liver)"/>
</dbReference>
<dbReference type="neXtProt" id="NX_Q9H1X3"/>
<dbReference type="OpenTargets" id="ENSG00000059769"/>
<dbReference type="PharmGKB" id="PA165585764"/>
<dbReference type="VEuPathDB" id="HostDB:ENSG00000059769"/>
<dbReference type="eggNOG" id="KOG0722">
    <property type="taxonomic scope" value="Eukaryota"/>
</dbReference>
<dbReference type="GeneTree" id="ENSGT00390000013355"/>
<dbReference type="HOGENOM" id="CLU_055735_0_0_1"/>
<dbReference type="InParanoid" id="Q9H1X3"/>
<dbReference type="OMA" id="WFWRYTV"/>
<dbReference type="OrthoDB" id="270167at2759"/>
<dbReference type="PAN-GO" id="Q9H1X3">
    <property type="GO annotations" value="2 GO annotations based on evolutionary models"/>
</dbReference>
<dbReference type="PhylomeDB" id="Q9H1X3"/>
<dbReference type="TreeFam" id="TF313563"/>
<dbReference type="PathwayCommons" id="Q9H1X3"/>
<dbReference type="SignaLink" id="Q9H1X3"/>
<dbReference type="BioGRID-ORCS" id="548645">
    <property type="hits" value="10 hits in 1133 CRISPR screens"/>
</dbReference>
<dbReference type="BioGRID-ORCS" id="552891">
    <property type="hits" value="2 hits in 163 CRISPR screens"/>
</dbReference>
<dbReference type="ChiTaRS" id="DNAJC25">
    <property type="organism name" value="human"/>
</dbReference>
<dbReference type="Pharos" id="Q9H1X3">
    <property type="development level" value="Tdark"/>
</dbReference>
<dbReference type="PRO" id="PR:Q9H1X3"/>
<dbReference type="Proteomes" id="UP000005640">
    <property type="component" value="Chromosome 9"/>
</dbReference>
<dbReference type="RNAct" id="Q9H1X3">
    <property type="molecule type" value="protein"/>
</dbReference>
<dbReference type="Bgee" id="ENSG00000059769">
    <property type="expression patterns" value="Expressed in epithelial cell of pancreas and 178 other cell types or tissues"/>
</dbReference>
<dbReference type="ExpressionAtlas" id="Q9H1X3">
    <property type="expression patterns" value="baseline and differential"/>
</dbReference>
<dbReference type="GO" id="GO:0005789">
    <property type="term" value="C:endoplasmic reticulum membrane"/>
    <property type="evidence" value="ECO:0000318"/>
    <property type="project" value="GO_Central"/>
</dbReference>
<dbReference type="GO" id="GO:0006457">
    <property type="term" value="P:protein folding"/>
    <property type="evidence" value="ECO:0000318"/>
    <property type="project" value="GO_Central"/>
</dbReference>
<dbReference type="CDD" id="cd06257">
    <property type="entry name" value="DnaJ"/>
    <property type="match status" value="1"/>
</dbReference>
<dbReference type="FunFam" id="1.10.287.110:FF:000036">
    <property type="entry name" value="dnaJ homolog subfamily C member 25"/>
    <property type="match status" value="1"/>
</dbReference>
<dbReference type="Gene3D" id="1.10.287.110">
    <property type="entry name" value="DnaJ domain"/>
    <property type="match status" value="1"/>
</dbReference>
<dbReference type="InterPro" id="IPR001623">
    <property type="entry name" value="DnaJ_domain"/>
</dbReference>
<dbReference type="InterPro" id="IPR044632">
    <property type="entry name" value="DNAJC25-like"/>
</dbReference>
<dbReference type="InterPro" id="IPR036869">
    <property type="entry name" value="J_dom_sf"/>
</dbReference>
<dbReference type="PANTHER" id="PTHR44176">
    <property type="entry name" value="DNAJ HOMOLOG SUBFAMILY C MEMBER 25"/>
    <property type="match status" value="1"/>
</dbReference>
<dbReference type="PANTHER" id="PTHR44176:SF1">
    <property type="entry name" value="DNAJ HOMOLOG SUBFAMILY C MEMBER 25"/>
    <property type="match status" value="1"/>
</dbReference>
<dbReference type="Pfam" id="PF00226">
    <property type="entry name" value="DnaJ"/>
    <property type="match status" value="1"/>
</dbReference>
<dbReference type="PRINTS" id="PR00625">
    <property type="entry name" value="JDOMAIN"/>
</dbReference>
<dbReference type="SMART" id="SM00271">
    <property type="entry name" value="DnaJ"/>
    <property type="match status" value="1"/>
</dbReference>
<dbReference type="SUPFAM" id="SSF46565">
    <property type="entry name" value="Chaperone J-domain"/>
    <property type="match status" value="1"/>
</dbReference>
<dbReference type="PROSITE" id="PS50076">
    <property type="entry name" value="DNAJ_2"/>
    <property type="match status" value="1"/>
</dbReference>
<evidence type="ECO:0000255" key="1"/>
<evidence type="ECO:0000255" key="2">
    <source>
        <dbReference type="PROSITE-ProRule" id="PRU00286"/>
    </source>
</evidence>
<evidence type="ECO:0000303" key="3">
    <source>
    </source>
</evidence>
<evidence type="ECO:0000303" key="4">
    <source>
    </source>
</evidence>
<evidence type="ECO:0000303" key="5">
    <source ref="1"/>
</evidence>
<evidence type="ECO:0000303" key="6">
    <source ref="3"/>
</evidence>
<evidence type="ECO:0000305" key="7"/>
<protein>
    <recommendedName>
        <fullName>DnaJ homolog subfamily C member 25</fullName>
    </recommendedName>
</protein>
<feature type="chain" id="PRO_0000348569" description="DnaJ homolog subfamily C member 25">
    <location>
        <begin position="1"/>
        <end position="360"/>
    </location>
</feature>
<feature type="transmembrane region" description="Helical" evidence="1">
    <location>
        <begin position="20"/>
        <end position="40"/>
    </location>
</feature>
<feature type="transmembrane region" description="Helical" evidence="1">
    <location>
        <begin position="150"/>
        <end position="170"/>
    </location>
</feature>
<feature type="transmembrane region" description="Helical" evidence="1">
    <location>
        <begin position="244"/>
        <end position="264"/>
    </location>
</feature>
<feature type="domain" description="J" evidence="2">
    <location>
        <begin position="49"/>
        <end position="124"/>
    </location>
</feature>
<feature type="splice variant" id="VSP_035180" description="In isoform 2." evidence="3 5">
    <location>
        <begin position="1"/>
        <end position="122"/>
    </location>
</feature>
<feature type="splice variant" id="VSP_035181" description="In isoform 3." evidence="4 6">
    <original>DEETRKDYDYMLDHPEEYYSHYYHYYSRRLAPKVDVRVVIL</original>
    <variation>VSQAAAELQQYCMQNACKDALLVGVPAGSNPFREPRSCALL</variation>
    <location>
        <begin position="113"/>
        <end position="153"/>
    </location>
</feature>
<feature type="splice variant" id="VSP_035182" description="In isoform 3." evidence="4 6">
    <location>
        <begin position="154"/>
        <end position="360"/>
    </location>
</feature>
<proteinExistence type="evidence at protein level"/>
<name>DJC25_HUMAN</name>
<reference key="1">
    <citation type="submission" date="2001-11" db="EMBL/GenBank/DDBJ databases">
        <authorList>
            <person name="Zan Q."/>
            <person name="Guo J.H."/>
            <person name="Yu L."/>
        </authorList>
    </citation>
    <scope>NUCLEOTIDE SEQUENCE [LARGE SCALE MRNA] (ISOFORM 2)</scope>
    <source>
        <tissue>Prostate</tissue>
    </source>
</reference>
<reference key="2">
    <citation type="journal article" date="2004" name="Nat. Genet.">
        <title>Complete sequencing and characterization of 21,243 full-length human cDNAs.</title>
        <authorList>
            <person name="Ota T."/>
            <person name="Suzuki Y."/>
            <person name="Nishikawa T."/>
            <person name="Otsuki T."/>
            <person name="Sugiyama T."/>
            <person name="Irie R."/>
            <person name="Wakamatsu A."/>
            <person name="Hayashi K."/>
            <person name="Sato H."/>
            <person name="Nagai K."/>
            <person name="Kimura K."/>
            <person name="Makita H."/>
            <person name="Sekine M."/>
            <person name="Obayashi M."/>
            <person name="Nishi T."/>
            <person name="Shibahara T."/>
            <person name="Tanaka T."/>
            <person name="Ishii S."/>
            <person name="Yamamoto J."/>
            <person name="Saito K."/>
            <person name="Kawai Y."/>
            <person name="Isono Y."/>
            <person name="Nakamura Y."/>
            <person name="Nagahari K."/>
            <person name="Murakami K."/>
            <person name="Yasuda T."/>
            <person name="Iwayanagi T."/>
            <person name="Wagatsuma M."/>
            <person name="Shiratori A."/>
            <person name="Sudo H."/>
            <person name="Hosoiri T."/>
            <person name="Kaku Y."/>
            <person name="Kodaira H."/>
            <person name="Kondo H."/>
            <person name="Sugawara M."/>
            <person name="Takahashi M."/>
            <person name="Kanda K."/>
            <person name="Yokoi T."/>
            <person name="Furuya T."/>
            <person name="Kikkawa E."/>
            <person name="Omura Y."/>
            <person name="Abe K."/>
            <person name="Kamihara K."/>
            <person name="Katsuta N."/>
            <person name="Sato K."/>
            <person name="Tanikawa M."/>
            <person name="Yamazaki M."/>
            <person name="Ninomiya K."/>
            <person name="Ishibashi T."/>
            <person name="Yamashita H."/>
            <person name="Murakawa K."/>
            <person name="Fujimori K."/>
            <person name="Tanai H."/>
            <person name="Kimata M."/>
            <person name="Watanabe M."/>
            <person name="Hiraoka S."/>
            <person name="Chiba Y."/>
            <person name="Ishida S."/>
            <person name="Ono Y."/>
            <person name="Takiguchi S."/>
            <person name="Watanabe S."/>
            <person name="Yosida M."/>
            <person name="Hotuta T."/>
            <person name="Kusano J."/>
            <person name="Kanehori K."/>
            <person name="Takahashi-Fujii A."/>
            <person name="Hara H."/>
            <person name="Tanase T.-O."/>
            <person name="Nomura Y."/>
            <person name="Togiya S."/>
            <person name="Komai F."/>
            <person name="Hara R."/>
            <person name="Takeuchi K."/>
            <person name="Arita M."/>
            <person name="Imose N."/>
            <person name="Musashino K."/>
            <person name="Yuuki H."/>
            <person name="Oshima A."/>
            <person name="Sasaki N."/>
            <person name="Aotsuka S."/>
            <person name="Yoshikawa Y."/>
            <person name="Matsunawa H."/>
            <person name="Ichihara T."/>
            <person name="Shiohata N."/>
            <person name="Sano S."/>
            <person name="Moriya S."/>
            <person name="Momiyama H."/>
            <person name="Satoh N."/>
            <person name="Takami S."/>
            <person name="Terashima Y."/>
            <person name="Suzuki O."/>
            <person name="Nakagawa S."/>
            <person name="Senoh A."/>
            <person name="Mizoguchi H."/>
            <person name="Goto Y."/>
            <person name="Shimizu F."/>
            <person name="Wakebe H."/>
            <person name="Hishigaki H."/>
            <person name="Watanabe T."/>
            <person name="Sugiyama A."/>
            <person name="Takemoto M."/>
            <person name="Kawakami B."/>
            <person name="Yamazaki M."/>
            <person name="Watanabe K."/>
            <person name="Kumagai A."/>
            <person name="Itakura S."/>
            <person name="Fukuzumi Y."/>
            <person name="Fujimori Y."/>
            <person name="Komiyama M."/>
            <person name="Tashiro H."/>
            <person name="Tanigami A."/>
            <person name="Fujiwara T."/>
            <person name="Ono T."/>
            <person name="Yamada K."/>
            <person name="Fujii Y."/>
            <person name="Ozaki K."/>
            <person name="Hirao M."/>
            <person name="Ohmori Y."/>
            <person name="Kawabata A."/>
            <person name="Hikiji T."/>
            <person name="Kobatake N."/>
            <person name="Inagaki H."/>
            <person name="Ikema Y."/>
            <person name="Okamoto S."/>
            <person name="Okitani R."/>
            <person name="Kawakami T."/>
            <person name="Noguchi S."/>
            <person name="Itoh T."/>
            <person name="Shigeta K."/>
            <person name="Senba T."/>
            <person name="Matsumura K."/>
            <person name="Nakajima Y."/>
            <person name="Mizuno T."/>
            <person name="Morinaga M."/>
            <person name="Sasaki M."/>
            <person name="Togashi T."/>
            <person name="Oyama M."/>
            <person name="Hata H."/>
            <person name="Watanabe M."/>
            <person name="Komatsu T."/>
            <person name="Mizushima-Sugano J."/>
            <person name="Satoh T."/>
            <person name="Shirai Y."/>
            <person name="Takahashi Y."/>
            <person name="Nakagawa K."/>
            <person name="Okumura K."/>
            <person name="Nagase T."/>
            <person name="Nomura N."/>
            <person name="Kikuchi H."/>
            <person name="Masuho Y."/>
            <person name="Yamashita R."/>
            <person name="Nakai K."/>
            <person name="Yada T."/>
            <person name="Nakamura Y."/>
            <person name="Ohara O."/>
            <person name="Isogai T."/>
            <person name="Sugano S."/>
        </authorList>
    </citation>
    <scope>NUCLEOTIDE SEQUENCE [LARGE SCALE MRNA] (ISOFORM 2)</scope>
</reference>
<reference key="3">
    <citation type="submission" date="2003-05" db="EMBL/GenBank/DDBJ databases">
        <title>Cloning of human full-length CDSs in BD Creator(TM) system donor vector.</title>
        <authorList>
            <person name="Kalnine N."/>
            <person name="Chen X."/>
            <person name="Rolfs A."/>
            <person name="Halleck A."/>
            <person name="Hines L."/>
            <person name="Eisenstein S."/>
            <person name="Koundinya M."/>
            <person name="Raphael J."/>
            <person name="Moreira D."/>
            <person name="Kelley T."/>
            <person name="LaBaer J."/>
            <person name="Lin Y."/>
            <person name="Phelan M."/>
            <person name="Farmer A."/>
        </authorList>
    </citation>
    <scope>NUCLEOTIDE SEQUENCE [LARGE SCALE MRNA] (ISOFORM 3)</scope>
</reference>
<reference key="4">
    <citation type="journal article" date="2004" name="Nature">
        <title>DNA sequence and analysis of human chromosome 9.</title>
        <authorList>
            <person name="Humphray S.J."/>
            <person name="Oliver K."/>
            <person name="Hunt A.R."/>
            <person name="Plumb R.W."/>
            <person name="Loveland J.E."/>
            <person name="Howe K.L."/>
            <person name="Andrews T.D."/>
            <person name="Searle S."/>
            <person name="Hunt S.E."/>
            <person name="Scott C.E."/>
            <person name="Jones M.C."/>
            <person name="Ainscough R."/>
            <person name="Almeida J.P."/>
            <person name="Ambrose K.D."/>
            <person name="Ashwell R.I.S."/>
            <person name="Babbage A.K."/>
            <person name="Babbage S."/>
            <person name="Bagguley C.L."/>
            <person name="Bailey J."/>
            <person name="Banerjee R."/>
            <person name="Barker D.J."/>
            <person name="Barlow K.F."/>
            <person name="Bates K."/>
            <person name="Beasley H."/>
            <person name="Beasley O."/>
            <person name="Bird C.P."/>
            <person name="Bray-Allen S."/>
            <person name="Brown A.J."/>
            <person name="Brown J.Y."/>
            <person name="Burford D."/>
            <person name="Burrill W."/>
            <person name="Burton J."/>
            <person name="Carder C."/>
            <person name="Carter N.P."/>
            <person name="Chapman J.C."/>
            <person name="Chen Y."/>
            <person name="Clarke G."/>
            <person name="Clark S.Y."/>
            <person name="Clee C.M."/>
            <person name="Clegg S."/>
            <person name="Collier R.E."/>
            <person name="Corby N."/>
            <person name="Crosier M."/>
            <person name="Cummings A.T."/>
            <person name="Davies J."/>
            <person name="Dhami P."/>
            <person name="Dunn M."/>
            <person name="Dutta I."/>
            <person name="Dyer L.W."/>
            <person name="Earthrowl M.E."/>
            <person name="Faulkner L."/>
            <person name="Fleming C.J."/>
            <person name="Frankish A."/>
            <person name="Frankland J.A."/>
            <person name="French L."/>
            <person name="Fricker D.G."/>
            <person name="Garner P."/>
            <person name="Garnett J."/>
            <person name="Ghori J."/>
            <person name="Gilbert J.G.R."/>
            <person name="Glison C."/>
            <person name="Grafham D.V."/>
            <person name="Gribble S."/>
            <person name="Griffiths C."/>
            <person name="Griffiths-Jones S."/>
            <person name="Grocock R."/>
            <person name="Guy J."/>
            <person name="Hall R.E."/>
            <person name="Hammond S."/>
            <person name="Harley J.L."/>
            <person name="Harrison E.S.I."/>
            <person name="Hart E.A."/>
            <person name="Heath P.D."/>
            <person name="Henderson C.D."/>
            <person name="Hopkins B.L."/>
            <person name="Howard P.J."/>
            <person name="Howden P.J."/>
            <person name="Huckle E."/>
            <person name="Johnson C."/>
            <person name="Johnson D."/>
            <person name="Joy A.A."/>
            <person name="Kay M."/>
            <person name="Keenan S."/>
            <person name="Kershaw J.K."/>
            <person name="Kimberley A.M."/>
            <person name="King A."/>
            <person name="Knights A."/>
            <person name="Laird G.K."/>
            <person name="Langford C."/>
            <person name="Lawlor S."/>
            <person name="Leongamornlert D.A."/>
            <person name="Leversha M."/>
            <person name="Lloyd C."/>
            <person name="Lloyd D.M."/>
            <person name="Lovell J."/>
            <person name="Martin S."/>
            <person name="Mashreghi-Mohammadi M."/>
            <person name="Matthews L."/>
            <person name="McLaren S."/>
            <person name="McLay K.E."/>
            <person name="McMurray A."/>
            <person name="Milne S."/>
            <person name="Nickerson T."/>
            <person name="Nisbett J."/>
            <person name="Nordsiek G."/>
            <person name="Pearce A.V."/>
            <person name="Peck A.I."/>
            <person name="Porter K.M."/>
            <person name="Pandian R."/>
            <person name="Pelan S."/>
            <person name="Phillimore B."/>
            <person name="Povey S."/>
            <person name="Ramsey Y."/>
            <person name="Rand V."/>
            <person name="Scharfe M."/>
            <person name="Sehra H.K."/>
            <person name="Shownkeen R."/>
            <person name="Sims S.K."/>
            <person name="Skuce C.D."/>
            <person name="Smith M."/>
            <person name="Steward C.A."/>
            <person name="Swarbreck D."/>
            <person name="Sycamore N."/>
            <person name="Tester J."/>
            <person name="Thorpe A."/>
            <person name="Tracey A."/>
            <person name="Tromans A."/>
            <person name="Thomas D.W."/>
            <person name="Wall M."/>
            <person name="Wallis J.M."/>
            <person name="West A.P."/>
            <person name="Whitehead S.L."/>
            <person name="Willey D.L."/>
            <person name="Williams S.A."/>
            <person name="Wilming L."/>
            <person name="Wray P.W."/>
            <person name="Young L."/>
            <person name="Ashurst J.L."/>
            <person name="Coulson A."/>
            <person name="Blocker H."/>
            <person name="Durbin R.M."/>
            <person name="Sulston J.E."/>
            <person name="Hubbard T."/>
            <person name="Jackson M.J."/>
            <person name="Bentley D.R."/>
            <person name="Beck S."/>
            <person name="Rogers J."/>
            <person name="Dunham I."/>
        </authorList>
    </citation>
    <scope>NUCLEOTIDE SEQUENCE [LARGE SCALE GENOMIC DNA]</scope>
</reference>
<reference key="5">
    <citation type="submission" date="2005-07" db="EMBL/GenBank/DDBJ databases">
        <authorList>
            <person name="Mural R.J."/>
            <person name="Istrail S."/>
            <person name="Sutton G.G."/>
            <person name="Florea L."/>
            <person name="Halpern A.L."/>
            <person name="Mobarry C.M."/>
            <person name="Lippert R."/>
            <person name="Walenz B."/>
            <person name="Shatkay H."/>
            <person name="Dew I."/>
            <person name="Miller J.R."/>
            <person name="Flanigan M.J."/>
            <person name="Edwards N.J."/>
            <person name="Bolanos R."/>
            <person name="Fasulo D."/>
            <person name="Halldorsson B.V."/>
            <person name="Hannenhalli S."/>
            <person name="Turner R."/>
            <person name="Yooseph S."/>
            <person name="Lu F."/>
            <person name="Nusskern D.R."/>
            <person name="Shue B.C."/>
            <person name="Zheng X.H."/>
            <person name="Zhong F."/>
            <person name="Delcher A.L."/>
            <person name="Huson D.H."/>
            <person name="Kravitz S.A."/>
            <person name="Mouchard L."/>
            <person name="Reinert K."/>
            <person name="Remington K.A."/>
            <person name="Clark A.G."/>
            <person name="Waterman M.S."/>
            <person name="Eichler E.E."/>
            <person name="Adams M.D."/>
            <person name="Hunkapiller M.W."/>
            <person name="Myers E.W."/>
            <person name="Venter J.C."/>
        </authorList>
    </citation>
    <scope>NUCLEOTIDE SEQUENCE [LARGE SCALE GENOMIC DNA]</scope>
</reference>
<reference key="6">
    <citation type="journal article" date="2004" name="Genome Res.">
        <title>The status, quality, and expansion of the NIH full-length cDNA project: the Mammalian Gene Collection (MGC).</title>
        <authorList>
            <consortium name="The MGC Project Team"/>
        </authorList>
    </citation>
    <scope>NUCLEOTIDE SEQUENCE [LARGE SCALE MRNA] (ISOFORMS 1 AND 3)</scope>
    <source>
        <tissue>Kidney</tissue>
    </source>
</reference>
<reference key="7">
    <citation type="journal article" date="2014" name="J. Proteomics">
        <title>An enzyme assisted RP-RPLC approach for in-depth analysis of human liver phosphoproteome.</title>
        <authorList>
            <person name="Bian Y."/>
            <person name="Song C."/>
            <person name="Cheng K."/>
            <person name="Dong M."/>
            <person name="Wang F."/>
            <person name="Huang J."/>
            <person name="Sun D."/>
            <person name="Wang L."/>
            <person name="Ye M."/>
            <person name="Zou H."/>
        </authorList>
    </citation>
    <scope>IDENTIFICATION BY MASS SPECTROMETRY [LARGE SCALE ANALYSIS]</scope>
    <source>
        <tissue>Liver</tissue>
    </source>
</reference>
<accession>Q9H1X3</accession>
<accession>Q5QTD8</accession>
<accession>Q96BN9</accession>
<sequence length="360" mass="42404">MGAPLLSPGWGAGAAGRRWWMLLAPLLPALLLVRPAGALVEGLYCGTRDCYEVLGVSRSAGKAEIARAYRQLARRYHPDRYRPQPGDEGPGRTPQSAEEAFLLVATAYETLKDEETRKDYDYMLDHPEEYYSHYYHYYSRRLAPKVDVRVVILVSVCAISVFQFFSWWNSYNKAISYLATVPKYRIQATEIAKQQGLLKKAKEKGKNKKSKEEIRDEEENIIKNIIKSKIDIKGGYQKPQICDLLLFQIILAPFHLCSYIVWYCRWIYNFNIKGKEYGEEERLYIIRKSMKMSKSQFDSLEDHQKETFLKRELWIKENYEVYKQEQEEELKKKLANDPRWKRYRRWMKNEGPGRLTFVDD</sequence>